<keyword id="KW-0010">Activator</keyword>
<keyword id="KW-0238">DNA-binding</keyword>
<keyword id="KW-1185">Reference proteome</keyword>
<keyword id="KW-0804">Transcription</keyword>
<keyword id="KW-0805">Transcription regulation</keyword>
<evidence type="ECO:0000250" key="1">
    <source>
        <dbReference type="UniProtKB" id="O14467"/>
    </source>
</evidence>
<evidence type="ECO:0000255" key="2">
    <source>
        <dbReference type="PROSITE-ProRule" id="PRU00257"/>
    </source>
</evidence>
<evidence type="ECO:0000256" key="3">
    <source>
        <dbReference type="SAM" id="MobiDB-lite"/>
    </source>
</evidence>
<evidence type="ECO:0000305" key="4"/>
<comment type="function">
    <text evidence="1">Transcriptional coactivator that stimulates GCN4-dependent transcriptional activity by bridging the DNA-binding region of GCN4 and TBP (SPT15), thereby recruiting TBP to GCN4-bound promoters. Involved in induction of the ribosome quality control (RQC) pathway; a pathway that degrades nascent peptide chains during problematic translation. Required to prevent stalled ribosomes from frameshifting.</text>
</comment>
<comment type="similarity">
    <text evidence="4">Belongs to the MBF1 family.</text>
</comment>
<name>MBF1_CRYNJ</name>
<proteinExistence type="inferred from homology"/>
<feature type="chain" id="PRO_0000149805" description="Multiprotein-bridging factor 1">
    <location>
        <begin position="1"/>
        <end position="150"/>
    </location>
</feature>
<feature type="domain" description="HTH cro/C1-type" evidence="2">
    <location>
        <begin position="84"/>
        <end position="137"/>
    </location>
</feature>
<feature type="DNA-binding region" description="H-T-H motif" evidence="2">
    <location>
        <begin position="94"/>
        <end position="113"/>
    </location>
</feature>
<feature type="region of interest" description="Disordered" evidence="3">
    <location>
        <begin position="36"/>
        <end position="71"/>
    </location>
</feature>
<feature type="compositionally biased region" description="Basic and acidic residues" evidence="3">
    <location>
        <begin position="48"/>
        <end position="70"/>
    </location>
</feature>
<dbReference type="EMBL" id="AE017350">
    <property type="protein sequence ID" value="AAW45939.1"/>
    <property type="molecule type" value="Genomic_DNA"/>
</dbReference>
<dbReference type="RefSeq" id="XP_567456.1">
    <property type="nucleotide sequence ID" value="XM_567456.1"/>
</dbReference>
<dbReference type="SMR" id="P0CO30"/>
<dbReference type="FunCoup" id="P0CO30">
    <property type="interactions" value="530"/>
</dbReference>
<dbReference type="STRING" id="214684.P0CO30"/>
<dbReference type="PaxDb" id="214684-P0CO30"/>
<dbReference type="EnsemblFungi" id="AAW45939">
    <property type="protein sequence ID" value="AAW45939"/>
    <property type="gene ID" value="CNJ00750"/>
</dbReference>
<dbReference type="GeneID" id="3254353"/>
<dbReference type="KEGG" id="cne:CNJ00750"/>
<dbReference type="VEuPathDB" id="FungiDB:CNJ00750"/>
<dbReference type="eggNOG" id="KOG3398">
    <property type="taxonomic scope" value="Eukaryota"/>
</dbReference>
<dbReference type="HOGENOM" id="CLU_112609_0_1_1"/>
<dbReference type="InParanoid" id="P0CO30"/>
<dbReference type="OMA" id="GKNKSCK"/>
<dbReference type="OrthoDB" id="10253401at2759"/>
<dbReference type="Proteomes" id="UP000002149">
    <property type="component" value="Chromosome 10"/>
</dbReference>
<dbReference type="GO" id="GO:0005634">
    <property type="term" value="C:nucleus"/>
    <property type="evidence" value="ECO:0000318"/>
    <property type="project" value="GO_Central"/>
</dbReference>
<dbReference type="GO" id="GO:0003677">
    <property type="term" value="F:DNA binding"/>
    <property type="evidence" value="ECO:0007669"/>
    <property type="project" value="UniProtKB-KW"/>
</dbReference>
<dbReference type="CDD" id="cd00093">
    <property type="entry name" value="HTH_XRE"/>
    <property type="match status" value="1"/>
</dbReference>
<dbReference type="FunFam" id="1.10.260.40:FF:000058">
    <property type="entry name" value="Multiprotein-bridging factor 1"/>
    <property type="match status" value="1"/>
</dbReference>
<dbReference type="Gene3D" id="1.10.260.40">
    <property type="entry name" value="lambda repressor-like DNA-binding domains"/>
    <property type="match status" value="1"/>
</dbReference>
<dbReference type="InterPro" id="IPR001387">
    <property type="entry name" value="Cro/C1-type_HTH"/>
</dbReference>
<dbReference type="InterPro" id="IPR010982">
    <property type="entry name" value="Lambda_DNA-bd_dom_sf"/>
</dbReference>
<dbReference type="InterPro" id="IPR013729">
    <property type="entry name" value="MBF1_N"/>
</dbReference>
<dbReference type="PANTHER" id="PTHR10245:SF15">
    <property type="entry name" value="ENDOTHELIAL DIFFERENTIATION-RELATED FACTOR 1"/>
    <property type="match status" value="1"/>
</dbReference>
<dbReference type="PANTHER" id="PTHR10245">
    <property type="entry name" value="ENDOTHELIAL DIFFERENTIATION-RELATED FACTOR 1 MULTIPROTEIN BRIDGING FACTOR 1"/>
    <property type="match status" value="1"/>
</dbReference>
<dbReference type="Pfam" id="PF01381">
    <property type="entry name" value="HTH_3"/>
    <property type="match status" value="1"/>
</dbReference>
<dbReference type="Pfam" id="PF08523">
    <property type="entry name" value="MBF1"/>
    <property type="match status" value="1"/>
</dbReference>
<dbReference type="SMART" id="SM00530">
    <property type="entry name" value="HTH_XRE"/>
    <property type="match status" value="1"/>
</dbReference>
<dbReference type="SUPFAM" id="SSF47413">
    <property type="entry name" value="lambda repressor-like DNA-binding domains"/>
    <property type="match status" value="1"/>
</dbReference>
<dbReference type="PROSITE" id="PS50943">
    <property type="entry name" value="HTH_CROC1"/>
    <property type="match status" value="1"/>
</dbReference>
<organism>
    <name type="scientific">Cryptococcus neoformans var. neoformans serotype D (strain JEC21 / ATCC MYA-565)</name>
    <name type="common">Filobasidiella neoformans</name>
    <dbReference type="NCBI Taxonomy" id="214684"/>
    <lineage>
        <taxon>Eukaryota</taxon>
        <taxon>Fungi</taxon>
        <taxon>Dikarya</taxon>
        <taxon>Basidiomycota</taxon>
        <taxon>Agaricomycotina</taxon>
        <taxon>Tremellomycetes</taxon>
        <taxon>Tremellales</taxon>
        <taxon>Cryptococcaceae</taxon>
        <taxon>Cryptococcus</taxon>
        <taxon>Cryptococcus neoformans species complex</taxon>
    </lineage>
</organism>
<reference key="1">
    <citation type="journal article" date="2005" name="Science">
        <title>The genome of the basidiomycetous yeast and human pathogen Cryptococcus neoformans.</title>
        <authorList>
            <person name="Loftus B.J."/>
            <person name="Fung E."/>
            <person name="Roncaglia P."/>
            <person name="Rowley D."/>
            <person name="Amedeo P."/>
            <person name="Bruno D."/>
            <person name="Vamathevan J."/>
            <person name="Miranda M."/>
            <person name="Anderson I.J."/>
            <person name="Fraser J.A."/>
            <person name="Allen J.E."/>
            <person name="Bosdet I.E."/>
            <person name="Brent M.R."/>
            <person name="Chiu R."/>
            <person name="Doering T.L."/>
            <person name="Donlin M.J."/>
            <person name="D'Souza C.A."/>
            <person name="Fox D.S."/>
            <person name="Grinberg V."/>
            <person name="Fu J."/>
            <person name="Fukushima M."/>
            <person name="Haas B.J."/>
            <person name="Huang J.C."/>
            <person name="Janbon G."/>
            <person name="Jones S.J.M."/>
            <person name="Koo H.L."/>
            <person name="Krzywinski M.I."/>
            <person name="Kwon-Chung K.J."/>
            <person name="Lengeler K.B."/>
            <person name="Maiti R."/>
            <person name="Marra M.A."/>
            <person name="Marra R.E."/>
            <person name="Mathewson C.A."/>
            <person name="Mitchell T.G."/>
            <person name="Pertea M."/>
            <person name="Riggs F.R."/>
            <person name="Salzberg S.L."/>
            <person name="Schein J.E."/>
            <person name="Shvartsbeyn A."/>
            <person name="Shin H."/>
            <person name="Shumway M."/>
            <person name="Specht C.A."/>
            <person name="Suh B.B."/>
            <person name="Tenney A."/>
            <person name="Utterback T.R."/>
            <person name="Wickes B.L."/>
            <person name="Wortman J.R."/>
            <person name="Wye N.H."/>
            <person name="Kronstad J.W."/>
            <person name="Lodge J.K."/>
            <person name="Heitman J."/>
            <person name="Davis R.W."/>
            <person name="Fraser C.M."/>
            <person name="Hyman R.W."/>
        </authorList>
    </citation>
    <scope>NUCLEOTIDE SEQUENCE [LARGE SCALE GENOMIC DNA]</scope>
    <source>
        <strain>JEC21 / ATCC MYA-565</strain>
    </source>
</reference>
<accession>P0CO30</accession>
<accession>Q55KQ9</accession>
<accession>Q5KAR7</accession>
<sequence length="150" mass="15938">MSDWDKPTVIGFRQQKPTVAKGSTLNAAQRAGLVISSESKGAGQSKGPADHQRIAKLDRDDAPKPPEKVSADVGKAVATARMAIKNAEGKSMTQKELATSVNAKPQDIADLESGRAVPDQALLGKLERKLNVKLRGAKNLIGTPLHPKKK</sequence>
<gene>
    <name type="primary">MBF1</name>
    <name type="ordered locus">CNJ00750</name>
</gene>
<protein>
    <recommendedName>
        <fullName>Multiprotein-bridging factor 1</fullName>
    </recommendedName>
</protein>